<sequence>MNLLATLERGLADIDAQGLRRRRRIADTACSAHMSVDGREIVGFASNDYLGLAAHPRLIEAFAEGARRYGAGSGGSHLLGGHSRAHAALEDELAAFSGGFSDAPRALYFSTGYMANLAALTALAGRGATIFSDALNHASLIDGTRLSRANVQVYPHGDADALDALLRACDAPTKLIVSDTVFSMDGDVAPLARLVALAEAHGAWLVVDDAHGFGVLGPQGRGALAAHGLRSPNLVYVGTLGKAAGAAGAFIVAHETVIEWLVQRARSYIFTTAAPPSVACAVSASLAVIASDEGDARRAHLAALIERTRAILRATPWQPVDSHTAVQPLVIGSNEATLAAMAALDAQGLWVPAIRPPTVPAGTSRLRISLSAAHSFADLARLEAALVTPIEAAA</sequence>
<gene>
    <name evidence="1" type="primary">bioF</name>
    <name type="ordered locus">BTH_I0339</name>
</gene>
<proteinExistence type="inferred from homology"/>
<comment type="function">
    <text evidence="1">Catalyzes the decarboxylative condensation of pimeloyl-[acyl-carrier protein] and L-alanine to produce 8-amino-7-oxononanoate (AON), [acyl-carrier protein], and carbon dioxide.</text>
</comment>
<comment type="catalytic activity">
    <reaction evidence="1">
        <text>6-carboxyhexanoyl-[ACP] + L-alanine + H(+) = (8S)-8-amino-7-oxononanoate + holo-[ACP] + CO2</text>
        <dbReference type="Rhea" id="RHEA:42288"/>
        <dbReference type="Rhea" id="RHEA-COMP:9685"/>
        <dbReference type="Rhea" id="RHEA-COMP:9955"/>
        <dbReference type="ChEBI" id="CHEBI:15378"/>
        <dbReference type="ChEBI" id="CHEBI:16526"/>
        <dbReference type="ChEBI" id="CHEBI:57972"/>
        <dbReference type="ChEBI" id="CHEBI:64479"/>
        <dbReference type="ChEBI" id="CHEBI:78846"/>
        <dbReference type="ChEBI" id="CHEBI:149468"/>
        <dbReference type="EC" id="2.3.1.47"/>
    </reaction>
</comment>
<comment type="cofactor">
    <cofactor evidence="1">
        <name>pyridoxal 5'-phosphate</name>
        <dbReference type="ChEBI" id="CHEBI:597326"/>
    </cofactor>
</comment>
<comment type="pathway">
    <text evidence="1">Cofactor biosynthesis; biotin biosynthesis.</text>
</comment>
<comment type="subunit">
    <text evidence="1">Homodimer.</text>
</comment>
<comment type="similarity">
    <text evidence="1">Belongs to the class-II pyridoxal-phosphate-dependent aminotransferase family. BioF subfamily.</text>
</comment>
<name>BIOF_BURTA</name>
<organism>
    <name type="scientific">Burkholderia thailandensis (strain ATCC 700388 / DSM 13276 / CCUG 48851 / CIP 106301 / E264)</name>
    <dbReference type="NCBI Taxonomy" id="271848"/>
    <lineage>
        <taxon>Bacteria</taxon>
        <taxon>Pseudomonadati</taxon>
        <taxon>Pseudomonadota</taxon>
        <taxon>Betaproteobacteria</taxon>
        <taxon>Burkholderiales</taxon>
        <taxon>Burkholderiaceae</taxon>
        <taxon>Burkholderia</taxon>
        <taxon>pseudomallei group</taxon>
    </lineage>
</organism>
<dbReference type="EC" id="2.3.1.47" evidence="1"/>
<dbReference type="EMBL" id="CP000086">
    <property type="protein sequence ID" value="ABC36338.1"/>
    <property type="molecule type" value="Genomic_DNA"/>
</dbReference>
<dbReference type="RefSeq" id="WP_009893287.1">
    <property type="nucleotide sequence ID" value="NZ_CP008785.1"/>
</dbReference>
<dbReference type="SMR" id="Q2T1Q2"/>
<dbReference type="GeneID" id="45120102"/>
<dbReference type="KEGG" id="bte:BTH_I0339"/>
<dbReference type="HOGENOM" id="CLU_015846_11_2_4"/>
<dbReference type="UniPathway" id="UPA00078"/>
<dbReference type="Proteomes" id="UP000001930">
    <property type="component" value="Chromosome I"/>
</dbReference>
<dbReference type="GO" id="GO:0008710">
    <property type="term" value="F:8-amino-7-oxononanoate synthase activity"/>
    <property type="evidence" value="ECO:0007669"/>
    <property type="project" value="UniProtKB-UniRule"/>
</dbReference>
<dbReference type="GO" id="GO:0030170">
    <property type="term" value="F:pyridoxal phosphate binding"/>
    <property type="evidence" value="ECO:0007669"/>
    <property type="project" value="UniProtKB-UniRule"/>
</dbReference>
<dbReference type="GO" id="GO:0009102">
    <property type="term" value="P:biotin biosynthetic process"/>
    <property type="evidence" value="ECO:0007669"/>
    <property type="project" value="UniProtKB-UniRule"/>
</dbReference>
<dbReference type="Gene3D" id="3.90.1150.10">
    <property type="entry name" value="Aspartate Aminotransferase, domain 1"/>
    <property type="match status" value="1"/>
</dbReference>
<dbReference type="Gene3D" id="3.40.640.10">
    <property type="entry name" value="Type I PLP-dependent aspartate aminotransferase-like (Major domain)"/>
    <property type="match status" value="1"/>
</dbReference>
<dbReference type="HAMAP" id="MF_01693">
    <property type="entry name" value="BioF_aminotrans_2"/>
    <property type="match status" value="1"/>
</dbReference>
<dbReference type="InterPro" id="IPR004839">
    <property type="entry name" value="Aminotransferase_I/II_large"/>
</dbReference>
<dbReference type="InterPro" id="IPR050087">
    <property type="entry name" value="AON_synthase_class-II"/>
</dbReference>
<dbReference type="InterPro" id="IPR004723">
    <property type="entry name" value="AONS_Archaea/Proteobacteria"/>
</dbReference>
<dbReference type="InterPro" id="IPR022834">
    <property type="entry name" value="AONS_Proteobacteria"/>
</dbReference>
<dbReference type="InterPro" id="IPR015424">
    <property type="entry name" value="PyrdxlP-dep_Trfase"/>
</dbReference>
<dbReference type="InterPro" id="IPR015421">
    <property type="entry name" value="PyrdxlP-dep_Trfase_major"/>
</dbReference>
<dbReference type="InterPro" id="IPR015422">
    <property type="entry name" value="PyrdxlP-dep_Trfase_small"/>
</dbReference>
<dbReference type="NCBIfam" id="TIGR00858">
    <property type="entry name" value="bioF"/>
    <property type="match status" value="1"/>
</dbReference>
<dbReference type="PANTHER" id="PTHR13693:SF100">
    <property type="entry name" value="8-AMINO-7-OXONONANOATE SYNTHASE"/>
    <property type="match status" value="1"/>
</dbReference>
<dbReference type="PANTHER" id="PTHR13693">
    <property type="entry name" value="CLASS II AMINOTRANSFERASE/8-AMINO-7-OXONONANOATE SYNTHASE"/>
    <property type="match status" value="1"/>
</dbReference>
<dbReference type="Pfam" id="PF00155">
    <property type="entry name" value="Aminotran_1_2"/>
    <property type="match status" value="1"/>
</dbReference>
<dbReference type="SUPFAM" id="SSF53383">
    <property type="entry name" value="PLP-dependent transferases"/>
    <property type="match status" value="1"/>
</dbReference>
<accession>Q2T1Q2</accession>
<feature type="chain" id="PRO_0000380945" description="8-amino-7-oxononanoate synthase">
    <location>
        <begin position="1"/>
        <end position="394"/>
    </location>
</feature>
<feature type="binding site" evidence="1">
    <location>
        <position position="21"/>
    </location>
    <ligand>
        <name>substrate</name>
    </ligand>
</feature>
<feature type="binding site" evidence="1">
    <location>
        <begin position="112"/>
        <end position="113"/>
    </location>
    <ligand>
        <name>pyridoxal 5'-phosphate</name>
        <dbReference type="ChEBI" id="CHEBI:597326"/>
    </ligand>
</feature>
<feature type="binding site" evidence="1">
    <location>
        <position position="137"/>
    </location>
    <ligand>
        <name>substrate</name>
    </ligand>
</feature>
<feature type="binding site" evidence="1">
    <location>
        <position position="183"/>
    </location>
    <ligand>
        <name>pyridoxal 5'-phosphate</name>
        <dbReference type="ChEBI" id="CHEBI:597326"/>
    </ligand>
</feature>
<feature type="binding site" evidence="1">
    <location>
        <position position="211"/>
    </location>
    <ligand>
        <name>pyridoxal 5'-phosphate</name>
        <dbReference type="ChEBI" id="CHEBI:597326"/>
    </ligand>
</feature>
<feature type="binding site" evidence="1">
    <location>
        <position position="239"/>
    </location>
    <ligand>
        <name>pyridoxal 5'-phosphate</name>
        <dbReference type="ChEBI" id="CHEBI:597326"/>
    </ligand>
</feature>
<feature type="binding site" evidence="1">
    <location>
        <position position="358"/>
    </location>
    <ligand>
        <name>substrate</name>
    </ligand>
</feature>
<feature type="modified residue" description="N6-(pyridoxal phosphate)lysine" evidence="1">
    <location>
        <position position="242"/>
    </location>
</feature>
<keyword id="KW-0093">Biotin biosynthesis</keyword>
<keyword id="KW-0663">Pyridoxal phosphate</keyword>
<keyword id="KW-0808">Transferase</keyword>
<reference key="1">
    <citation type="journal article" date="2005" name="BMC Genomics">
        <title>Bacterial genome adaptation to niches: divergence of the potential virulence genes in three Burkholderia species of different survival strategies.</title>
        <authorList>
            <person name="Kim H.S."/>
            <person name="Schell M.A."/>
            <person name="Yu Y."/>
            <person name="Ulrich R.L."/>
            <person name="Sarria S.H."/>
            <person name="Nierman W.C."/>
            <person name="DeShazer D."/>
        </authorList>
    </citation>
    <scope>NUCLEOTIDE SEQUENCE [LARGE SCALE GENOMIC DNA]</scope>
    <source>
        <strain>ATCC 700388 / DSM 13276 / CCUG 48851 / CIP 106301 / E264</strain>
    </source>
</reference>
<evidence type="ECO:0000255" key="1">
    <source>
        <dbReference type="HAMAP-Rule" id="MF_01693"/>
    </source>
</evidence>
<protein>
    <recommendedName>
        <fullName evidence="1">8-amino-7-oxononanoate synthase</fullName>
        <shortName evidence="1">AONS</shortName>
        <ecNumber evidence="1">2.3.1.47</ecNumber>
    </recommendedName>
    <alternativeName>
        <fullName evidence="1">7-keto-8-amino-pelargonic acid synthase</fullName>
        <shortName evidence="1">7-KAP synthase</shortName>
        <shortName evidence="1">KAPA synthase</shortName>
    </alternativeName>
    <alternativeName>
        <fullName evidence="1">8-amino-7-ketopelargonate synthase</fullName>
    </alternativeName>
</protein>